<protein>
    <recommendedName>
        <fullName evidence="1">DNA ligase B</fullName>
        <ecNumber evidence="1">6.5.1.2</ecNumber>
    </recommendedName>
    <alternativeName>
        <fullName evidence="1">Polydeoxyribonucleotide synthase [NAD(+)] B</fullName>
    </alternativeName>
</protein>
<gene>
    <name evidence="1" type="primary">ligB</name>
    <name type="ordered locus">YE0048</name>
</gene>
<reference key="1">
    <citation type="journal article" date="2006" name="PLoS Genet.">
        <title>The complete genome sequence and comparative genome analysis of the high pathogenicity Yersinia enterocolitica strain 8081.</title>
        <authorList>
            <person name="Thomson N.R."/>
            <person name="Howard S."/>
            <person name="Wren B.W."/>
            <person name="Holden M.T.G."/>
            <person name="Crossman L."/>
            <person name="Challis G.L."/>
            <person name="Churcher C."/>
            <person name="Mungall K."/>
            <person name="Brooks K."/>
            <person name="Chillingworth T."/>
            <person name="Feltwell T."/>
            <person name="Abdellah Z."/>
            <person name="Hauser H."/>
            <person name="Jagels K."/>
            <person name="Maddison M."/>
            <person name="Moule S."/>
            <person name="Sanders M."/>
            <person name="Whitehead S."/>
            <person name="Quail M.A."/>
            <person name="Dougan G."/>
            <person name="Parkhill J."/>
            <person name="Prentice M.B."/>
        </authorList>
    </citation>
    <scope>NUCLEOTIDE SEQUENCE [LARGE SCALE GENOMIC DNA]</scope>
    <source>
        <strain>NCTC 13174 / 8081</strain>
    </source>
</reference>
<organism>
    <name type="scientific">Yersinia enterocolitica serotype O:8 / biotype 1B (strain NCTC 13174 / 8081)</name>
    <dbReference type="NCBI Taxonomy" id="393305"/>
    <lineage>
        <taxon>Bacteria</taxon>
        <taxon>Pseudomonadati</taxon>
        <taxon>Pseudomonadota</taxon>
        <taxon>Gammaproteobacteria</taxon>
        <taxon>Enterobacterales</taxon>
        <taxon>Yersiniaceae</taxon>
        <taxon>Yersinia</taxon>
    </lineage>
</organism>
<accession>A1JHV9</accession>
<name>LIGB_YERE8</name>
<keyword id="KW-0227">DNA damage</keyword>
<keyword id="KW-0234">DNA repair</keyword>
<keyword id="KW-0235">DNA replication</keyword>
<keyword id="KW-0436">Ligase</keyword>
<keyword id="KW-0520">NAD</keyword>
<comment type="function">
    <text evidence="1">Catalyzes the formation of phosphodiester linkages between 5'-phosphoryl and 3'-hydroxyl groups in double-stranded DNA using NAD as a coenzyme and as the energy source for the reaction.</text>
</comment>
<comment type="catalytic activity">
    <reaction evidence="1">
        <text>NAD(+) + (deoxyribonucleotide)n-3'-hydroxyl + 5'-phospho-(deoxyribonucleotide)m = (deoxyribonucleotide)n+m + AMP + beta-nicotinamide D-nucleotide.</text>
        <dbReference type="EC" id="6.5.1.2"/>
    </reaction>
</comment>
<comment type="similarity">
    <text evidence="1">Belongs to the NAD-dependent DNA ligase family. LigB subfamily.</text>
</comment>
<proteinExistence type="inferred from homology"/>
<feature type="chain" id="PRO_0000313557" description="DNA ligase B">
    <location>
        <begin position="1"/>
        <end position="565"/>
    </location>
</feature>
<feature type="active site" description="N6-AMP-lysine intermediate" evidence="1">
    <location>
        <position position="130"/>
    </location>
</feature>
<evidence type="ECO:0000255" key="1">
    <source>
        <dbReference type="HAMAP-Rule" id="MF_01587"/>
    </source>
</evidence>
<sequence>MNVHKMKILSLLMVSFISWQARAESVCPEWSEERMSGEMHLLEKQLDQWNIAYHQQGISPIADDIYDQLQDKLHRWRLCLGLPDKTDNRPIPGNGKMLHPVAHTGLKKLKDEAALISWMTGRKNLWVQPKIDGVAVTLVYQAGKLTQVLSRGNGLKGQNWADKAPFISAIPQYIASAPPLLTLQGEVFLQMEGHQQAQSGGANARASVAGALMRKSVSPLLAKLGIFIWAWPDGPKSMVEKSRLLQEMGFPLTAHYSEPVISSSDVALWRDRWFKMPLPFVTDGVVIRQENVPAGRYWQATPGNWSVAWKYPPPQQITEIKDIHFTVGRTGKITAILQVIPVKIDDKWIRRVNIGSIARWKQWDIVPGDQVTISLAGQGIPRLDKVIWRVSQRQEIVPPDADKFHQLTCFRRLPFECEPQFLSRLAWLSGTNGLDMQSVGNGLWRELIHHGFINGLLDWLSLSVEQIAAVPGIGQGRAEKIYQQFQRARQQPFSQWLQALGFPQGIPLDTSWHSLRQRSIAEWRLMPGIGQVRAKQINHFLHHPEVQMMADFLSQQGIAGFSPEE</sequence>
<dbReference type="EC" id="6.5.1.2" evidence="1"/>
<dbReference type="EMBL" id="AM286415">
    <property type="protein sequence ID" value="CAL10192.1"/>
    <property type="molecule type" value="Genomic_DNA"/>
</dbReference>
<dbReference type="RefSeq" id="WP_011815269.1">
    <property type="nucleotide sequence ID" value="NC_008800.1"/>
</dbReference>
<dbReference type="RefSeq" id="YP_001004444.1">
    <property type="nucleotide sequence ID" value="NC_008800.1"/>
</dbReference>
<dbReference type="SMR" id="A1JHV9"/>
<dbReference type="KEGG" id="yen:YE0048"/>
<dbReference type="PATRIC" id="fig|393305.7.peg.138"/>
<dbReference type="eggNOG" id="COG0272">
    <property type="taxonomic scope" value="Bacteria"/>
</dbReference>
<dbReference type="HOGENOM" id="CLU_489786_0_0_6"/>
<dbReference type="OrthoDB" id="9759736at2"/>
<dbReference type="Proteomes" id="UP000000642">
    <property type="component" value="Chromosome"/>
</dbReference>
<dbReference type="GO" id="GO:0003911">
    <property type="term" value="F:DNA ligase (NAD+) activity"/>
    <property type="evidence" value="ECO:0007669"/>
    <property type="project" value="UniProtKB-UniRule"/>
</dbReference>
<dbReference type="GO" id="GO:0006281">
    <property type="term" value="P:DNA repair"/>
    <property type="evidence" value="ECO:0007669"/>
    <property type="project" value="UniProtKB-KW"/>
</dbReference>
<dbReference type="GO" id="GO:0006260">
    <property type="term" value="P:DNA replication"/>
    <property type="evidence" value="ECO:0007669"/>
    <property type="project" value="UniProtKB-KW"/>
</dbReference>
<dbReference type="Gene3D" id="1.10.150.20">
    <property type="entry name" value="5' to 3' exonuclease, C-terminal subdomain"/>
    <property type="match status" value="1"/>
</dbReference>
<dbReference type="Gene3D" id="3.30.470.30">
    <property type="entry name" value="DNA ligase/mRNA capping enzyme"/>
    <property type="match status" value="1"/>
</dbReference>
<dbReference type="Gene3D" id="2.40.50.140">
    <property type="entry name" value="Nucleic acid-binding proteins"/>
    <property type="match status" value="1"/>
</dbReference>
<dbReference type="HAMAP" id="MF_01587">
    <property type="entry name" value="DNA_ligase_B"/>
    <property type="match status" value="1"/>
</dbReference>
<dbReference type="InterPro" id="IPR020923">
    <property type="entry name" value="DNA_ligase_B"/>
</dbReference>
<dbReference type="InterPro" id="IPR013839">
    <property type="entry name" value="DNAligase_adenylation"/>
</dbReference>
<dbReference type="InterPro" id="IPR013840">
    <property type="entry name" value="DNAligase_N"/>
</dbReference>
<dbReference type="InterPro" id="IPR012340">
    <property type="entry name" value="NA-bd_OB-fold"/>
</dbReference>
<dbReference type="InterPro" id="IPR050326">
    <property type="entry name" value="NAD_dep_DNA_ligaseB"/>
</dbReference>
<dbReference type="InterPro" id="IPR004150">
    <property type="entry name" value="NAD_DNA_ligase_OB"/>
</dbReference>
<dbReference type="InterPro" id="IPR010994">
    <property type="entry name" value="RuvA_2-like"/>
</dbReference>
<dbReference type="NCBIfam" id="NF005987">
    <property type="entry name" value="PRK08097.1"/>
    <property type="match status" value="1"/>
</dbReference>
<dbReference type="PANTHER" id="PTHR47810">
    <property type="entry name" value="DNA LIGASE"/>
    <property type="match status" value="1"/>
</dbReference>
<dbReference type="PANTHER" id="PTHR47810:SF1">
    <property type="entry name" value="DNA LIGASE B"/>
    <property type="match status" value="1"/>
</dbReference>
<dbReference type="Pfam" id="PF01653">
    <property type="entry name" value="DNA_ligase_aden"/>
    <property type="match status" value="1"/>
</dbReference>
<dbReference type="Pfam" id="PF03120">
    <property type="entry name" value="DNA_ligase_OB"/>
    <property type="match status" value="1"/>
</dbReference>
<dbReference type="SMART" id="SM00532">
    <property type="entry name" value="LIGANc"/>
    <property type="match status" value="1"/>
</dbReference>
<dbReference type="SUPFAM" id="SSF56091">
    <property type="entry name" value="DNA ligase/mRNA capping enzyme, catalytic domain"/>
    <property type="match status" value="1"/>
</dbReference>
<dbReference type="SUPFAM" id="SSF50249">
    <property type="entry name" value="Nucleic acid-binding proteins"/>
    <property type="match status" value="1"/>
</dbReference>
<dbReference type="SUPFAM" id="SSF47781">
    <property type="entry name" value="RuvA domain 2-like"/>
    <property type="match status" value="1"/>
</dbReference>